<gene>
    <name evidence="1" type="primary">rpsJ</name>
    <name type="ordered locus">Mlut_17170</name>
</gene>
<comment type="function">
    <text evidence="1">Involved in the binding of tRNA to the ribosomes.</text>
</comment>
<comment type="subunit">
    <text evidence="1">Part of the 30S ribosomal subunit.</text>
</comment>
<comment type="similarity">
    <text evidence="1">Belongs to the universal ribosomal protein uS10 family.</text>
</comment>
<organism>
    <name type="scientific">Micrococcus luteus (strain ATCC 4698 / DSM 20030 / JCM 1464 / CCM 169 / CCUG 5858 / IAM 1056 / NBRC 3333 / NCIMB 9278 / NCTC 2665 / VKM Ac-2230)</name>
    <name type="common">Micrococcus lysodeikticus</name>
    <dbReference type="NCBI Taxonomy" id="465515"/>
    <lineage>
        <taxon>Bacteria</taxon>
        <taxon>Bacillati</taxon>
        <taxon>Actinomycetota</taxon>
        <taxon>Actinomycetes</taxon>
        <taxon>Micrococcales</taxon>
        <taxon>Micrococcaceae</taxon>
        <taxon>Micrococcus</taxon>
    </lineage>
</organism>
<protein>
    <recommendedName>
        <fullName evidence="1">Small ribosomal subunit protein uS10</fullName>
    </recommendedName>
    <alternativeName>
        <fullName evidence="2">30S ribosomal protein S10</fullName>
    </alternativeName>
</protein>
<name>RS10_MICLC</name>
<sequence>MAGQKIRIRLKSYDHEVIDVSARKIVDTVTRAGATVVGPVPLPTEKNVYCVIRSPHKYKDSREHFEMRTHKRLIDIIDPTPKAVDSLMRLDLPADVNIEIKL</sequence>
<proteinExistence type="inferred from homology"/>
<feature type="chain" id="PRO_1000206591" description="Small ribosomal subunit protein uS10">
    <location>
        <begin position="1"/>
        <end position="102"/>
    </location>
</feature>
<accession>C5CC63</accession>
<dbReference type="EMBL" id="CP001628">
    <property type="protein sequence ID" value="ACS31204.1"/>
    <property type="molecule type" value="Genomic_DNA"/>
</dbReference>
<dbReference type="RefSeq" id="WP_002857463.1">
    <property type="nucleotide sequence ID" value="NC_012803.1"/>
</dbReference>
<dbReference type="SMR" id="C5CC63"/>
<dbReference type="STRING" id="465515.Mlut_17170"/>
<dbReference type="EnsemblBacteria" id="ACS31204">
    <property type="protein sequence ID" value="ACS31204"/>
    <property type="gene ID" value="Mlut_17170"/>
</dbReference>
<dbReference type="GeneID" id="93364269"/>
<dbReference type="KEGG" id="mlu:Mlut_17170"/>
<dbReference type="eggNOG" id="COG0051">
    <property type="taxonomic scope" value="Bacteria"/>
</dbReference>
<dbReference type="HOGENOM" id="CLU_122625_1_3_11"/>
<dbReference type="Proteomes" id="UP000000738">
    <property type="component" value="Chromosome"/>
</dbReference>
<dbReference type="GO" id="GO:1990904">
    <property type="term" value="C:ribonucleoprotein complex"/>
    <property type="evidence" value="ECO:0007669"/>
    <property type="project" value="UniProtKB-KW"/>
</dbReference>
<dbReference type="GO" id="GO:0005840">
    <property type="term" value="C:ribosome"/>
    <property type="evidence" value="ECO:0007669"/>
    <property type="project" value="UniProtKB-KW"/>
</dbReference>
<dbReference type="GO" id="GO:0003735">
    <property type="term" value="F:structural constituent of ribosome"/>
    <property type="evidence" value="ECO:0007669"/>
    <property type="project" value="InterPro"/>
</dbReference>
<dbReference type="GO" id="GO:0000049">
    <property type="term" value="F:tRNA binding"/>
    <property type="evidence" value="ECO:0007669"/>
    <property type="project" value="UniProtKB-UniRule"/>
</dbReference>
<dbReference type="GO" id="GO:0006412">
    <property type="term" value="P:translation"/>
    <property type="evidence" value="ECO:0007669"/>
    <property type="project" value="UniProtKB-UniRule"/>
</dbReference>
<dbReference type="FunFam" id="3.30.70.600:FF:000001">
    <property type="entry name" value="30S ribosomal protein S10"/>
    <property type="match status" value="1"/>
</dbReference>
<dbReference type="Gene3D" id="3.30.70.600">
    <property type="entry name" value="Ribosomal protein S10 domain"/>
    <property type="match status" value="1"/>
</dbReference>
<dbReference type="HAMAP" id="MF_00508">
    <property type="entry name" value="Ribosomal_uS10"/>
    <property type="match status" value="1"/>
</dbReference>
<dbReference type="InterPro" id="IPR001848">
    <property type="entry name" value="Ribosomal_uS10"/>
</dbReference>
<dbReference type="InterPro" id="IPR018268">
    <property type="entry name" value="Ribosomal_uS10_CS"/>
</dbReference>
<dbReference type="InterPro" id="IPR027486">
    <property type="entry name" value="Ribosomal_uS10_dom"/>
</dbReference>
<dbReference type="InterPro" id="IPR036838">
    <property type="entry name" value="Ribosomal_uS10_dom_sf"/>
</dbReference>
<dbReference type="NCBIfam" id="NF001861">
    <property type="entry name" value="PRK00596.1"/>
    <property type="match status" value="1"/>
</dbReference>
<dbReference type="NCBIfam" id="TIGR01049">
    <property type="entry name" value="rpsJ_bact"/>
    <property type="match status" value="1"/>
</dbReference>
<dbReference type="PANTHER" id="PTHR11700">
    <property type="entry name" value="30S RIBOSOMAL PROTEIN S10 FAMILY MEMBER"/>
    <property type="match status" value="1"/>
</dbReference>
<dbReference type="Pfam" id="PF00338">
    <property type="entry name" value="Ribosomal_S10"/>
    <property type="match status" value="1"/>
</dbReference>
<dbReference type="PRINTS" id="PR00971">
    <property type="entry name" value="RIBOSOMALS10"/>
</dbReference>
<dbReference type="SMART" id="SM01403">
    <property type="entry name" value="Ribosomal_S10"/>
    <property type="match status" value="1"/>
</dbReference>
<dbReference type="SUPFAM" id="SSF54999">
    <property type="entry name" value="Ribosomal protein S10"/>
    <property type="match status" value="1"/>
</dbReference>
<dbReference type="PROSITE" id="PS00361">
    <property type="entry name" value="RIBOSOMAL_S10"/>
    <property type="match status" value="1"/>
</dbReference>
<reference key="1">
    <citation type="journal article" date="2010" name="J. Bacteriol.">
        <title>Genome sequence of the Fleming strain of Micrococcus luteus, a simple free-living actinobacterium.</title>
        <authorList>
            <person name="Young M."/>
            <person name="Artsatbanov V."/>
            <person name="Beller H.R."/>
            <person name="Chandra G."/>
            <person name="Chater K.F."/>
            <person name="Dover L.G."/>
            <person name="Goh E.B."/>
            <person name="Kahan T."/>
            <person name="Kaprelyants A.S."/>
            <person name="Kyrpides N."/>
            <person name="Lapidus A."/>
            <person name="Lowry S.R."/>
            <person name="Lykidis A."/>
            <person name="Mahillon J."/>
            <person name="Markowitz V."/>
            <person name="Mavromatis K."/>
            <person name="Mukamolova G.V."/>
            <person name="Oren A."/>
            <person name="Rokem J.S."/>
            <person name="Smith M.C."/>
            <person name="Young D.I."/>
            <person name="Greenblatt C.L."/>
        </authorList>
    </citation>
    <scope>NUCLEOTIDE SEQUENCE [LARGE SCALE GENOMIC DNA]</scope>
    <source>
        <strain>ATCC 4698 / DSM 20030 / JCM 1464 / CCM 169 / CCUG 5858 / IAM 1056 / NBRC 3333 / NCIMB 9278 / NCTC 2665 / VKM Ac-2230</strain>
    </source>
</reference>
<evidence type="ECO:0000255" key="1">
    <source>
        <dbReference type="HAMAP-Rule" id="MF_00508"/>
    </source>
</evidence>
<evidence type="ECO:0000305" key="2"/>
<keyword id="KW-1185">Reference proteome</keyword>
<keyword id="KW-0687">Ribonucleoprotein</keyword>
<keyword id="KW-0689">Ribosomal protein</keyword>